<feature type="chain" id="PRO_0000434809" description="Ceramide glucosyltransferase">
    <location>
        <begin position="1"/>
        <end position="450"/>
    </location>
</feature>
<feature type="topological domain" description="Lumenal" evidence="6">
    <location>
        <begin position="1"/>
        <end position="8"/>
    </location>
</feature>
<feature type="transmembrane region" description="Helical" evidence="3">
    <location>
        <begin position="9"/>
        <end position="29"/>
    </location>
</feature>
<feature type="topological domain" description="Cytoplasmic" evidence="2">
    <location>
        <begin position="30"/>
        <end position="337"/>
    </location>
</feature>
<feature type="transmembrane region" description="Helical" evidence="3">
    <location>
        <begin position="338"/>
        <end position="358"/>
    </location>
</feature>
<feature type="topological domain" description="Lumenal" evidence="6">
    <location>
        <begin position="359"/>
        <end position="361"/>
    </location>
</feature>
<feature type="transmembrane region" description="Helical" evidence="3">
    <location>
        <begin position="362"/>
        <end position="382"/>
    </location>
</feature>
<feature type="topological domain" description="Cytoplasmic" evidence="6">
    <location>
        <begin position="383"/>
        <end position="401"/>
    </location>
</feature>
<feature type="transmembrane region" description="Helical" evidence="3">
    <location>
        <begin position="402"/>
        <end position="422"/>
    </location>
</feature>
<feature type="topological domain" description="Lumenal" evidence="6">
    <location>
        <begin position="423"/>
        <end position="450"/>
    </location>
</feature>
<feature type="short sequence motif" description="D1" evidence="6">
    <location>
        <position position="96"/>
    </location>
</feature>
<feature type="short sequence motif" description="D2" evidence="6">
    <location>
        <position position="148"/>
    </location>
</feature>
<feature type="short sequence motif" description="D3" evidence="6">
    <location>
        <position position="286"/>
    </location>
</feature>
<feature type="short sequence motif" description="(Q/R)XXRW" evidence="6">
    <location>
        <begin position="323"/>
        <end position="327"/>
    </location>
</feature>
<feature type="active site" description="Proton acceptor" evidence="2">
    <location>
        <position position="286"/>
    </location>
</feature>
<gene>
    <name evidence="5" type="primary">GCS1</name>
    <name type="ORF">CNAG_05583</name>
</gene>
<organism>
    <name type="scientific">Cryptococcus neoformans var. grubii serotype A (strain H99 / ATCC 208821 / CBS 10515 / FGSC 9487)</name>
    <name type="common">Filobasidiella neoformans var. grubii</name>
    <dbReference type="NCBI Taxonomy" id="235443"/>
    <lineage>
        <taxon>Eukaryota</taxon>
        <taxon>Fungi</taxon>
        <taxon>Dikarya</taxon>
        <taxon>Basidiomycota</taxon>
        <taxon>Agaricomycotina</taxon>
        <taxon>Tremellomycetes</taxon>
        <taxon>Tremellales</taxon>
        <taxon>Cryptococcaceae</taxon>
        <taxon>Cryptococcus</taxon>
        <taxon>Cryptococcus neoformans species complex</taxon>
    </lineage>
</organism>
<dbReference type="EC" id="2.4.1.80" evidence="4"/>
<dbReference type="EMBL" id="AY956317">
    <property type="protein sequence ID" value="AAX55972.1"/>
    <property type="molecule type" value="mRNA"/>
</dbReference>
<dbReference type="EMBL" id="CP003833">
    <property type="protein sequence ID" value="AFR99010.1"/>
    <property type="molecule type" value="Genomic_DNA"/>
</dbReference>
<dbReference type="RefSeq" id="XP_012053860.1">
    <property type="nucleotide sequence ID" value="XM_012198470.1"/>
</dbReference>
<dbReference type="GeneID" id="23888885"/>
<dbReference type="KEGG" id="cng:CNAG_05583"/>
<dbReference type="VEuPathDB" id="FungiDB:CNAG_05583"/>
<dbReference type="HOGENOM" id="CLU_030898_1_0_1"/>
<dbReference type="OrthoDB" id="1095at5206"/>
<dbReference type="BRENDA" id="2.4.1.80">
    <property type="organism ID" value="1723"/>
</dbReference>
<dbReference type="UniPathway" id="UPA00222"/>
<dbReference type="PHI-base" id="PHI:693"/>
<dbReference type="Proteomes" id="UP000010091">
    <property type="component" value="Chromosome 14"/>
</dbReference>
<dbReference type="GO" id="GO:0000139">
    <property type="term" value="C:Golgi membrane"/>
    <property type="evidence" value="ECO:0007669"/>
    <property type="project" value="UniProtKB-SubCell"/>
</dbReference>
<dbReference type="GO" id="GO:0008120">
    <property type="term" value="F:ceramide glucosyltransferase activity"/>
    <property type="evidence" value="ECO:0007669"/>
    <property type="project" value="UniProtKB-EC"/>
</dbReference>
<dbReference type="GO" id="GO:0006679">
    <property type="term" value="P:glucosylceramide biosynthetic process"/>
    <property type="evidence" value="ECO:0007669"/>
    <property type="project" value="TreeGrafter"/>
</dbReference>
<dbReference type="CDD" id="cd02520">
    <property type="entry name" value="Glucosylceramide_synthase"/>
    <property type="match status" value="1"/>
</dbReference>
<dbReference type="FunFam" id="3.90.550.10:FF:000159">
    <property type="entry name" value="Unplaced genomic scaffold supercont1.48, whole genome shotgun sequence"/>
    <property type="match status" value="1"/>
</dbReference>
<dbReference type="Gene3D" id="3.90.550.10">
    <property type="entry name" value="Spore Coat Polysaccharide Biosynthesis Protein SpsA, Chain A"/>
    <property type="match status" value="1"/>
</dbReference>
<dbReference type="InterPro" id="IPR025993">
    <property type="entry name" value="Ceramide_glucosylTrfase"/>
</dbReference>
<dbReference type="InterPro" id="IPR029044">
    <property type="entry name" value="Nucleotide-diphossugar_trans"/>
</dbReference>
<dbReference type="PANTHER" id="PTHR12726">
    <property type="entry name" value="CERAMIDE GLUCOSYLTRANSFERASE"/>
    <property type="match status" value="1"/>
</dbReference>
<dbReference type="PANTHER" id="PTHR12726:SF0">
    <property type="entry name" value="CERAMIDE GLUCOSYLTRANSFERASE"/>
    <property type="match status" value="1"/>
</dbReference>
<dbReference type="Pfam" id="PF13641">
    <property type="entry name" value="Glyco_tranf_2_3"/>
    <property type="match status" value="1"/>
</dbReference>
<dbReference type="SUPFAM" id="SSF53448">
    <property type="entry name" value="Nucleotide-diphospho-sugar transferases"/>
    <property type="match status" value="1"/>
</dbReference>
<reference key="1">
    <citation type="journal article" date="2006" name="J. Clin. Invest.">
        <title>Glucosylceramide synthase is an essential regulator of pathogenicity of Cryptococcus neoformans.</title>
        <authorList>
            <person name="Rittershaus P.C."/>
            <person name="Kechichian T.B."/>
            <person name="Allegood J.C."/>
            <person name="Merrill A.H. Jr."/>
            <person name="Hennig M."/>
            <person name="Luberto C."/>
            <person name="Del Poeta M."/>
        </authorList>
    </citation>
    <scope>NUCLEOTIDE SEQUENCE [MRNA]</scope>
    <scope>FUNCTION</scope>
    <scope>CATALYTIC ACTIVITY</scope>
    <scope>PATHWAY</scope>
    <scope>DISRUPTION PHENOTYPE</scope>
    <source>
        <strain>H99 / ATCC 208821 / CBS 10515 / FGSC 9487</strain>
    </source>
</reference>
<reference key="2">
    <citation type="journal article" date="2007" name="J. Clin. Invest.">
        <authorList>
            <person name="Rittershaus P.C."/>
            <person name="Kechichian T.B."/>
            <person name="Allegood J.C."/>
            <person name="Merrill A.H. Jr."/>
            <person name="Hennig M."/>
            <person name="Luberto C."/>
            <person name="Del Poeta M."/>
        </authorList>
    </citation>
    <scope>ERRATUM OF PUBMED:16741577</scope>
</reference>
<reference key="3">
    <citation type="journal article" date="2014" name="PLoS Genet.">
        <title>Analysis of the genome and transcriptome of Cryptococcus neoformans var. grubii reveals complex RNA expression and microevolution leading to virulence attenuation.</title>
        <authorList>
            <person name="Janbon G."/>
            <person name="Ormerod K.L."/>
            <person name="Paulet D."/>
            <person name="Byrnes E.J. III"/>
            <person name="Yadav V."/>
            <person name="Chatterjee G."/>
            <person name="Mullapudi N."/>
            <person name="Hon C.-C."/>
            <person name="Billmyre R.B."/>
            <person name="Brunel F."/>
            <person name="Bahn Y.-S."/>
            <person name="Chen W."/>
            <person name="Chen Y."/>
            <person name="Chow E.W.L."/>
            <person name="Coppee J.-Y."/>
            <person name="Floyd-Averette A."/>
            <person name="Gaillardin C."/>
            <person name="Gerik K.J."/>
            <person name="Goldberg J."/>
            <person name="Gonzalez-Hilarion S."/>
            <person name="Gujja S."/>
            <person name="Hamlin J.L."/>
            <person name="Hsueh Y.-P."/>
            <person name="Ianiri G."/>
            <person name="Jones S."/>
            <person name="Kodira C.D."/>
            <person name="Kozubowski L."/>
            <person name="Lam W."/>
            <person name="Marra M."/>
            <person name="Mesner L.D."/>
            <person name="Mieczkowski P.A."/>
            <person name="Moyrand F."/>
            <person name="Nielsen K."/>
            <person name="Proux C."/>
            <person name="Rossignol T."/>
            <person name="Schein J.E."/>
            <person name="Sun S."/>
            <person name="Wollschlaeger C."/>
            <person name="Wood I.A."/>
            <person name="Zeng Q."/>
            <person name="Neuveglise C."/>
            <person name="Newlon C.S."/>
            <person name="Perfect J.R."/>
            <person name="Lodge J.K."/>
            <person name="Idnurm A."/>
            <person name="Stajich J.E."/>
            <person name="Kronstad J.W."/>
            <person name="Sanyal K."/>
            <person name="Heitman J."/>
            <person name="Fraser J.A."/>
            <person name="Cuomo C.A."/>
            <person name="Dietrich F.S."/>
        </authorList>
    </citation>
    <scope>NUCLEOTIDE SEQUENCE [LARGE SCALE GENOMIC DNA]</scope>
    <source>
        <strain>H99 / ATCC 208821 / CBS 10515 / FGSC 9487</strain>
    </source>
</reference>
<accession>J9W453</accession>
<accession>Q58FH5</accession>
<evidence type="ECO:0000250" key="1">
    <source>
        <dbReference type="UniProtKB" id="Q16739"/>
    </source>
</evidence>
<evidence type="ECO:0000250" key="2">
    <source>
        <dbReference type="UniProtKB" id="Q9R0E0"/>
    </source>
</evidence>
<evidence type="ECO:0000255" key="3"/>
<evidence type="ECO:0000269" key="4">
    <source>
    </source>
</evidence>
<evidence type="ECO:0000303" key="5">
    <source>
    </source>
</evidence>
<evidence type="ECO:0000305" key="6"/>
<evidence type="ECO:0000305" key="7">
    <source>
    </source>
</evidence>
<name>CEGT_CRYNH</name>
<keyword id="KW-0328">Glycosyltransferase</keyword>
<keyword id="KW-0333">Golgi apparatus</keyword>
<keyword id="KW-0443">Lipid metabolism</keyword>
<keyword id="KW-0472">Membrane</keyword>
<keyword id="KW-0746">Sphingolipid metabolism</keyword>
<keyword id="KW-0808">Transferase</keyword>
<keyword id="KW-0812">Transmembrane</keyword>
<keyword id="KW-1133">Transmembrane helix</keyword>
<proteinExistence type="evidence at protein level"/>
<comment type="function">
    <text evidence="4">Catalyzes the final step in the biosynthesis of the membrane lipid glucosylceramide (GluCer), the transfer of glucose to ceramide. Glucosylceramides play important roles in growth, differentiation and pathogenicity. Essential factor in determining the success of fungal infection by regulating survival of yeast cells during the initial colonization of the host lung.</text>
</comment>
<comment type="catalytic activity">
    <reaction evidence="4">
        <text>an N-acylsphing-4-enine + UDP-alpha-D-glucose = a beta-D-glucosyl-(1&lt;-&gt;1')-N-acylsphing-4-enine + UDP + H(+)</text>
        <dbReference type="Rhea" id="RHEA:12088"/>
        <dbReference type="ChEBI" id="CHEBI:15378"/>
        <dbReference type="ChEBI" id="CHEBI:22801"/>
        <dbReference type="ChEBI" id="CHEBI:52639"/>
        <dbReference type="ChEBI" id="CHEBI:58223"/>
        <dbReference type="ChEBI" id="CHEBI:58885"/>
        <dbReference type="EC" id="2.4.1.80"/>
    </reaction>
</comment>
<comment type="pathway">
    <text evidence="7">Lipid metabolism; sphingolipid metabolism.</text>
</comment>
<comment type="subcellular location">
    <subcellularLocation>
        <location evidence="2">Golgi apparatus membrane</location>
        <topology evidence="3">Multi-pass membrane protein</topology>
    </subcellularLocation>
</comment>
<comment type="domain">
    <text evidence="2">The D1, D2, D3, (Q/R)XXRW motif is a critical part of the GCS active site, involved in catalysis and UDP-sugar binding.</text>
</comment>
<comment type="disruption phenotype">
    <text evidence="4">Results in complete loss of glucosylceramides (GluCers) in mutant cells.</text>
</comment>
<comment type="similarity">
    <text evidence="6">Belongs to the glycosyltransferase 2 family.</text>
</comment>
<protein>
    <recommendedName>
        <fullName evidence="1">Ceramide glucosyltransferase</fullName>
        <ecNumber evidence="4">2.4.1.80</ecNumber>
    </recommendedName>
    <alternativeName>
        <fullName>GLCT-1</fullName>
    </alternativeName>
    <alternativeName>
        <fullName evidence="5">Glucosylceramide synthase</fullName>
        <shortName evidence="5">GCS</shortName>
    </alternativeName>
    <alternativeName>
        <fullName>UDP-glucose ceramide glucosyltransferase</fullName>
    </alternativeName>
    <alternativeName>
        <fullName>UDP-glucose:N-acylsphingosine D-glucosyltransferase</fullName>
    </alternativeName>
</protein>
<sequence length="450" mass="49721">MSDSGTLSLIGGIVFLVLWVVVWSICLLGWRTARIRYAHPNIPSRLSKLPVSSAPGVTIIRPLCGLDQNLYNTLESVMKLDYPKFEVIFAVQDEKDEALPVVNMVMEKYPEVEAKVIIDSRKVGVNPKVNNLMTPFQEAKYDLLWILDSTCSVLPGTLGRSVEAFFSNTSSTASPYDPESSPLLSISDDVRKPPIAGEVGLVHQVPIAVCYQKTWGSLIEQAYLNTTHAKMYLAINATSIDSCVVGKSCMYSRDNISHLTTPSPSLRSLPDPPSGLAGFGPFLAEDNMIGLSLWHELKLKHAMTSDVVLDFIGSLSVRDYINRRVRWIRVRKKMTLAATLLEPLTESIISGLYGAWAISRLLGGNILPLFLLHMAAWISVDISTKRALETNIKGIGPPESKVTFLMAWAARECLALPIWMLAMTSSEVVWRGQKYKIIASGEAIRLGDRN</sequence>